<name>PROA_HYPNA</name>
<organism>
    <name type="scientific">Hyphomonas neptunium (strain ATCC 15444)</name>
    <dbReference type="NCBI Taxonomy" id="228405"/>
    <lineage>
        <taxon>Bacteria</taxon>
        <taxon>Pseudomonadati</taxon>
        <taxon>Pseudomonadota</taxon>
        <taxon>Alphaproteobacteria</taxon>
        <taxon>Hyphomonadales</taxon>
        <taxon>Hyphomonadaceae</taxon>
        <taxon>Hyphomonas</taxon>
    </lineage>
</organism>
<keyword id="KW-0028">Amino-acid biosynthesis</keyword>
<keyword id="KW-0963">Cytoplasm</keyword>
<keyword id="KW-0521">NADP</keyword>
<keyword id="KW-0560">Oxidoreductase</keyword>
<keyword id="KW-0641">Proline biosynthesis</keyword>
<keyword id="KW-1185">Reference proteome</keyword>
<protein>
    <recommendedName>
        <fullName evidence="1">Gamma-glutamyl phosphate reductase</fullName>
        <shortName evidence="1">GPR</shortName>
        <ecNumber evidence="1">1.2.1.41</ecNumber>
    </recommendedName>
    <alternativeName>
        <fullName evidence="1">Glutamate-5-semialdehyde dehydrogenase</fullName>
    </alternativeName>
    <alternativeName>
        <fullName evidence="1">Glutamyl-gamma-semialdehyde dehydrogenase</fullName>
        <shortName evidence="1">GSA dehydrogenase</shortName>
    </alternativeName>
</protein>
<gene>
    <name evidence="1" type="primary">proA</name>
    <name type="ordered locus">HNE_3429</name>
</gene>
<proteinExistence type="inferred from homology"/>
<evidence type="ECO:0000255" key="1">
    <source>
        <dbReference type="HAMAP-Rule" id="MF_00412"/>
    </source>
</evidence>
<comment type="function">
    <text evidence="1">Catalyzes the NADPH-dependent reduction of L-glutamate 5-phosphate into L-glutamate 5-semialdehyde and phosphate. The product spontaneously undergoes cyclization to form 1-pyrroline-5-carboxylate.</text>
</comment>
<comment type="catalytic activity">
    <reaction evidence="1">
        <text>L-glutamate 5-semialdehyde + phosphate + NADP(+) = L-glutamyl 5-phosphate + NADPH + H(+)</text>
        <dbReference type="Rhea" id="RHEA:19541"/>
        <dbReference type="ChEBI" id="CHEBI:15378"/>
        <dbReference type="ChEBI" id="CHEBI:43474"/>
        <dbReference type="ChEBI" id="CHEBI:57783"/>
        <dbReference type="ChEBI" id="CHEBI:58066"/>
        <dbReference type="ChEBI" id="CHEBI:58274"/>
        <dbReference type="ChEBI" id="CHEBI:58349"/>
        <dbReference type="EC" id="1.2.1.41"/>
    </reaction>
</comment>
<comment type="pathway">
    <text evidence="1">Amino-acid biosynthesis; L-proline biosynthesis; L-glutamate 5-semialdehyde from L-glutamate: step 2/2.</text>
</comment>
<comment type="subcellular location">
    <subcellularLocation>
        <location evidence="1">Cytoplasm</location>
    </subcellularLocation>
</comment>
<comment type="similarity">
    <text evidence="1">Belongs to the gamma-glutamyl phosphate reductase family.</text>
</comment>
<reference key="1">
    <citation type="journal article" date="2006" name="J. Bacteriol.">
        <title>Comparative genomic evidence for a close relationship between the dimorphic prosthecate bacteria Hyphomonas neptunium and Caulobacter crescentus.</title>
        <authorList>
            <person name="Badger J.H."/>
            <person name="Hoover T.R."/>
            <person name="Brun Y.V."/>
            <person name="Weiner R.M."/>
            <person name="Laub M.T."/>
            <person name="Alexandre G."/>
            <person name="Mrazek J."/>
            <person name="Ren Q."/>
            <person name="Paulsen I.T."/>
            <person name="Nelson K.E."/>
            <person name="Khouri H.M."/>
            <person name="Radune D."/>
            <person name="Sosa J."/>
            <person name="Dodson R.J."/>
            <person name="Sullivan S.A."/>
            <person name="Rosovitz M.J."/>
            <person name="Madupu R."/>
            <person name="Brinkac L.M."/>
            <person name="Durkin A.S."/>
            <person name="Daugherty S.C."/>
            <person name="Kothari S.P."/>
            <person name="Giglio M.G."/>
            <person name="Zhou L."/>
            <person name="Haft D.H."/>
            <person name="Selengut J.D."/>
            <person name="Davidsen T.M."/>
            <person name="Yang Q."/>
            <person name="Zafar N."/>
            <person name="Ward N.L."/>
        </authorList>
    </citation>
    <scope>NUCLEOTIDE SEQUENCE [LARGE SCALE GENOMIC DNA]</scope>
    <source>
        <strain>ATCC 15444</strain>
    </source>
</reference>
<dbReference type="EC" id="1.2.1.41" evidence="1"/>
<dbReference type="EMBL" id="CP000158">
    <property type="protein sequence ID" value="ABI77483.1"/>
    <property type="molecule type" value="Genomic_DNA"/>
</dbReference>
<dbReference type="RefSeq" id="WP_011648397.1">
    <property type="nucleotide sequence ID" value="NC_008358.1"/>
</dbReference>
<dbReference type="SMR" id="Q0BWP1"/>
<dbReference type="STRING" id="228405.HNE_3429"/>
<dbReference type="KEGG" id="hne:HNE_3429"/>
<dbReference type="eggNOG" id="COG0014">
    <property type="taxonomic scope" value="Bacteria"/>
</dbReference>
<dbReference type="HOGENOM" id="CLU_030231_0_0_5"/>
<dbReference type="UniPathway" id="UPA00098">
    <property type="reaction ID" value="UER00360"/>
</dbReference>
<dbReference type="Proteomes" id="UP000001959">
    <property type="component" value="Chromosome"/>
</dbReference>
<dbReference type="GO" id="GO:0005737">
    <property type="term" value="C:cytoplasm"/>
    <property type="evidence" value="ECO:0007669"/>
    <property type="project" value="UniProtKB-SubCell"/>
</dbReference>
<dbReference type="GO" id="GO:0004350">
    <property type="term" value="F:glutamate-5-semialdehyde dehydrogenase activity"/>
    <property type="evidence" value="ECO:0007669"/>
    <property type="project" value="UniProtKB-UniRule"/>
</dbReference>
<dbReference type="GO" id="GO:0050661">
    <property type="term" value="F:NADP binding"/>
    <property type="evidence" value="ECO:0007669"/>
    <property type="project" value="InterPro"/>
</dbReference>
<dbReference type="GO" id="GO:0055129">
    <property type="term" value="P:L-proline biosynthetic process"/>
    <property type="evidence" value="ECO:0007669"/>
    <property type="project" value="UniProtKB-UniRule"/>
</dbReference>
<dbReference type="CDD" id="cd07079">
    <property type="entry name" value="ALDH_F18-19_ProA-GPR"/>
    <property type="match status" value="1"/>
</dbReference>
<dbReference type="FunFam" id="3.40.309.10:FF:000006">
    <property type="entry name" value="Gamma-glutamyl phosphate reductase"/>
    <property type="match status" value="1"/>
</dbReference>
<dbReference type="Gene3D" id="3.40.605.10">
    <property type="entry name" value="Aldehyde Dehydrogenase, Chain A, domain 1"/>
    <property type="match status" value="1"/>
</dbReference>
<dbReference type="Gene3D" id="3.40.309.10">
    <property type="entry name" value="Aldehyde Dehydrogenase, Chain A, domain 2"/>
    <property type="match status" value="1"/>
</dbReference>
<dbReference type="HAMAP" id="MF_00412">
    <property type="entry name" value="ProA"/>
    <property type="match status" value="1"/>
</dbReference>
<dbReference type="InterPro" id="IPR016161">
    <property type="entry name" value="Ald_DH/histidinol_DH"/>
</dbReference>
<dbReference type="InterPro" id="IPR016163">
    <property type="entry name" value="Ald_DH_C"/>
</dbReference>
<dbReference type="InterPro" id="IPR016162">
    <property type="entry name" value="Ald_DH_N"/>
</dbReference>
<dbReference type="InterPro" id="IPR015590">
    <property type="entry name" value="Aldehyde_DH_dom"/>
</dbReference>
<dbReference type="InterPro" id="IPR012134">
    <property type="entry name" value="Glu-5-SA_DH"/>
</dbReference>
<dbReference type="InterPro" id="IPR000965">
    <property type="entry name" value="GPR_dom"/>
</dbReference>
<dbReference type="NCBIfam" id="NF001221">
    <property type="entry name" value="PRK00197.1"/>
    <property type="match status" value="1"/>
</dbReference>
<dbReference type="NCBIfam" id="TIGR00407">
    <property type="entry name" value="proA"/>
    <property type="match status" value="1"/>
</dbReference>
<dbReference type="PANTHER" id="PTHR11063:SF8">
    <property type="entry name" value="DELTA-1-PYRROLINE-5-CARBOXYLATE SYNTHASE"/>
    <property type="match status" value="1"/>
</dbReference>
<dbReference type="PANTHER" id="PTHR11063">
    <property type="entry name" value="GLUTAMATE SEMIALDEHYDE DEHYDROGENASE"/>
    <property type="match status" value="1"/>
</dbReference>
<dbReference type="Pfam" id="PF00171">
    <property type="entry name" value="Aldedh"/>
    <property type="match status" value="1"/>
</dbReference>
<dbReference type="PIRSF" id="PIRSF000151">
    <property type="entry name" value="GPR"/>
    <property type="match status" value="1"/>
</dbReference>
<dbReference type="SUPFAM" id="SSF53720">
    <property type="entry name" value="ALDH-like"/>
    <property type="match status" value="1"/>
</dbReference>
<feature type="chain" id="PRO_1000049955" description="Gamma-glutamyl phosphate reductase">
    <location>
        <begin position="1"/>
        <end position="428"/>
    </location>
</feature>
<sequence length="428" mass="44310">MTVQTSPPSAALAETMLDMGRRARAASRELGLLTAQDRTRGLKAIAAAIRAAAPDVLRANAEDMAAARAKGLAPAMLDRLALDEKRLEGVAAGVETVAALPDPLGRELARWTPPNGLDIARIAVPLGVIGIIYESRPNVTVDAGVLCLRSGNAAILRGGSESAKSSAALANAMRGALKSEELPVDAIQLVATTNREAVGHMLGGLEGALDVIVPRGGRSLVERVQAEARVPVIGHLEGLCHTYVHAAADPKKAVDIVLNAKMRRTGVCGSTETLLIDVAVAATLLPQIAKALTDAGCELRGDGRTRAILGDITPATEADWATEYLDAILSIAVVDGLPGALAHLARWSSGHTDAIITEDTAAAETFIANVDSAIVLHNASTQFADGGEFGFGAEIGIATGRIHARGPVGAEQLTTYKYAVRGTGQVRP</sequence>
<accession>Q0BWP1</accession>